<organism>
    <name type="scientific">Gluconacetobacter diazotrophicus (strain ATCC 49037 / DSM 5601 / CCUG 37298 / CIP 103539 / LMG 7603 / PAl5)</name>
    <dbReference type="NCBI Taxonomy" id="272568"/>
    <lineage>
        <taxon>Bacteria</taxon>
        <taxon>Pseudomonadati</taxon>
        <taxon>Pseudomonadota</taxon>
        <taxon>Alphaproteobacteria</taxon>
        <taxon>Acetobacterales</taxon>
        <taxon>Acetobacteraceae</taxon>
        <taxon>Gluconacetobacter</taxon>
    </lineage>
</organism>
<protein>
    <recommendedName>
        <fullName evidence="1">Integration host factor subunit beta</fullName>
        <shortName evidence="1">IHF-beta</shortName>
    </recommendedName>
</protein>
<feature type="chain" id="PRO_1000080045" description="Integration host factor subunit beta">
    <location>
        <begin position="1"/>
        <end position="98"/>
    </location>
</feature>
<accession>A9H0B5</accession>
<accession>B5ZKF5</accession>
<proteinExistence type="inferred from homology"/>
<name>IHFB_GLUDA</name>
<sequence length="98" mass="10751">MTKSELIAELAAANPHLLSRDVELIVQTIFSEISAALARGDRVELRGFGAFTVKKRDARTGRNPRTGEMVAVDEKVVPFFKAGKELRERVNNGAPAED</sequence>
<keyword id="KW-0233">DNA recombination</keyword>
<keyword id="KW-0238">DNA-binding</keyword>
<keyword id="KW-1185">Reference proteome</keyword>
<keyword id="KW-0804">Transcription</keyword>
<keyword id="KW-0805">Transcription regulation</keyword>
<keyword id="KW-0810">Translation regulation</keyword>
<dbReference type="EMBL" id="AM889285">
    <property type="protein sequence ID" value="CAP57102.1"/>
    <property type="molecule type" value="Genomic_DNA"/>
</dbReference>
<dbReference type="EMBL" id="CP001189">
    <property type="protein sequence ID" value="ACI52929.1"/>
    <property type="molecule type" value="Genomic_DNA"/>
</dbReference>
<dbReference type="RefSeq" id="WP_012227540.1">
    <property type="nucleotide sequence ID" value="NC_010125.1"/>
</dbReference>
<dbReference type="SMR" id="A9H0B5"/>
<dbReference type="STRING" id="272568.GDI3159"/>
<dbReference type="KEGG" id="gdi:GDI3159"/>
<dbReference type="KEGG" id="gdj:Gdia_3199"/>
<dbReference type="eggNOG" id="COG0776">
    <property type="taxonomic scope" value="Bacteria"/>
</dbReference>
<dbReference type="HOGENOM" id="CLU_105066_2_1_5"/>
<dbReference type="OrthoDB" id="9804203at2"/>
<dbReference type="Proteomes" id="UP000001176">
    <property type="component" value="Chromosome"/>
</dbReference>
<dbReference type="GO" id="GO:0005694">
    <property type="term" value="C:chromosome"/>
    <property type="evidence" value="ECO:0007669"/>
    <property type="project" value="InterPro"/>
</dbReference>
<dbReference type="GO" id="GO:0005829">
    <property type="term" value="C:cytosol"/>
    <property type="evidence" value="ECO:0007669"/>
    <property type="project" value="TreeGrafter"/>
</dbReference>
<dbReference type="GO" id="GO:0003677">
    <property type="term" value="F:DNA binding"/>
    <property type="evidence" value="ECO:0007669"/>
    <property type="project" value="UniProtKB-UniRule"/>
</dbReference>
<dbReference type="GO" id="GO:0030527">
    <property type="term" value="F:structural constituent of chromatin"/>
    <property type="evidence" value="ECO:0007669"/>
    <property type="project" value="InterPro"/>
</dbReference>
<dbReference type="GO" id="GO:0006310">
    <property type="term" value="P:DNA recombination"/>
    <property type="evidence" value="ECO:0007669"/>
    <property type="project" value="UniProtKB-UniRule"/>
</dbReference>
<dbReference type="GO" id="GO:0006355">
    <property type="term" value="P:regulation of DNA-templated transcription"/>
    <property type="evidence" value="ECO:0007669"/>
    <property type="project" value="UniProtKB-UniRule"/>
</dbReference>
<dbReference type="GO" id="GO:0006417">
    <property type="term" value="P:regulation of translation"/>
    <property type="evidence" value="ECO:0007669"/>
    <property type="project" value="UniProtKB-UniRule"/>
</dbReference>
<dbReference type="CDD" id="cd13836">
    <property type="entry name" value="IHF_B"/>
    <property type="match status" value="1"/>
</dbReference>
<dbReference type="Gene3D" id="4.10.520.10">
    <property type="entry name" value="IHF-like DNA-binding proteins"/>
    <property type="match status" value="1"/>
</dbReference>
<dbReference type="HAMAP" id="MF_00381">
    <property type="entry name" value="IHF_beta"/>
    <property type="match status" value="1"/>
</dbReference>
<dbReference type="InterPro" id="IPR000119">
    <property type="entry name" value="Hist_DNA-bd"/>
</dbReference>
<dbReference type="InterPro" id="IPR020816">
    <property type="entry name" value="Histone-like_DNA-bd_CS"/>
</dbReference>
<dbReference type="InterPro" id="IPR010992">
    <property type="entry name" value="IHF-like_DNA-bd_dom_sf"/>
</dbReference>
<dbReference type="InterPro" id="IPR005685">
    <property type="entry name" value="IHF_beta"/>
</dbReference>
<dbReference type="NCBIfam" id="TIGR00988">
    <property type="entry name" value="hip"/>
    <property type="match status" value="1"/>
</dbReference>
<dbReference type="NCBIfam" id="NF001222">
    <property type="entry name" value="PRK00199.1"/>
    <property type="match status" value="1"/>
</dbReference>
<dbReference type="PANTHER" id="PTHR33175">
    <property type="entry name" value="DNA-BINDING PROTEIN HU"/>
    <property type="match status" value="1"/>
</dbReference>
<dbReference type="PANTHER" id="PTHR33175:SF5">
    <property type="entry name" value="INTEGRATION HOST FACTOR SUBUNIT BETA"/>
    <property type="match status" value="1"/>
</dbReference>
<dbReference type="Pfam" id="PF00216">
    <property type="entry name" value="Bac_DNA_binding"/>
    <property type="match status" value="1"/>
</dbReference>
<dbReference type="PRINTS" id="PR01727">
    <property type="entry name" value="DNABINDINGHU"/>
</dbReference>
<dbReference type="SMART" id="SM00411">
    <property type="entry name" value="BHL"/>
    <property type="match status" value="1"/>
</dbReference>
<dbReference type="SUPFAM" id="SSF47729">
    <property type="entry name" value="IHF-like DNA-binding proteins"/>
    <property type="match status" value="1"/>
</dbReference>
<dbReference type="PROSITE" id="PS00045">
    <property type="entry name" value="HISTONE_LIKE"/>
    <property type="match status" value="1"/>
</dbReference>
<evidence type="ECO:0000255" key="1">
    <source>
        <dbReference type="HAMAP-Rule" id="MF_00381"/>
    </source>
</evidence>
<comment type="function">
    <text evidence="1">This protein is one of the two subunits of integration host factor, a specific DNA-binding protein that functions in genetic recombination as well as in transcriptional and translational control.</text>
</comment>
<comment type="subunit">
    <text evidence="1">Heterodimer of an alpha and a beta chain.</text>
</comment>
<comment type="similarity">
    <text evidence="1">Belongs to the bacterial histone-like protein family.</text>
</comment>
<gene>
    <name evidence="1" type="primary">ihfB</name>
    <name evidence="1" type="synonym">himD</name>
    <name type="ordered locus">GDI3159</name>
    <name type="ordered locus">Gdia_3199</name>
</gene>
<reference key="1">
    <citation type="journal article" date="2009" name="BMC Genomics">
        <title>Complete genome sequence of the sugarcane nitrogen-fixing endophyte Gluconacetobacter diazotrophicus Pal5.</title>
        <authorList>
            <person name="Bertalan M."/>
            <person name="Albano R."/>
            <person name="de Padua V."/>
            <person name="Rouws L."/>
            <person name="Rojas C."/>
            <person name="Hemerly A."/>
            <person name="Teixeira K."/>
            <person name="Schwab S."/>
            <person name="Araujo J."/>
            <person name="Oliveira A."/>
            <person name="Franca L."/>
            <person name="Magalhaes V."/>
            <person name="Alqueres S."/>
            <person name="Cardoso A."/>
            <person name="Almeida W."/>
            <person name="Loureiro M.M."/>
            <person name="Nogueira E."/>
            <person name="Cidade D."/>
            <person name="Oliveira D."/>
            <person name="Simao T."/>
            <person name="Macedo J."/>
            <person name="Valadao A."/>
            <person name="Dreschsel M."/>
            <person name="Freitas F."/>
            <person name="Vidal M."/>
            <person name="Guedes H."/>
            <person name="Rodrigues E."/>
            <person name="Meneses C."/>
            <person name="Brioso P."/>
            <person name="Pozzer L."/>
            <person name="Figueiredo D."/>
            <person name="Montano H."/>
            <person name="Junior J."/>
            <person name="de Souza Filho G."/>
            <person name="Martin Quintana Flores V."/>
            <person name="Ferreira B."/>
            <person name="Branco A."/>
            <person name="Gonzalez P."/>
            <person name="Guillobel H."/>
            <person name="Lemos M."/>
            <person name="Seibel L."/>
            <person name="Macedo J."/>
            <person name="Alves-Ferreira M."/>
            <person name="Sachetto-Martins G."/>
            <person name="Coelho A."/>
            <person name="Santos E."/>
            <person name="Amaral G."/>
            <person name="Neves A."/>
            <person name="Pacheco A.B."/>
            <person name="Carvalho D."/>
            <person name="Lery L."/>
            <person name="Bisch P."/>
            <person name="Rossle S.C."/>
            <person name="Urmenyi T."/>
            <person name="Rael Pereira A."/>
            <person name="Silva R."/>
            <person name="Rondinelli E."/>
            <person name="von Kruger W."/>
            <person name="Martins O."/>
            <person name="Baldani J.I."/>
            <person name="Ferreira P.C."/>
        </authorList>
    </citation>
    <scope>NUCLEOTIDE SEQUENCE [LARGE SCALE GENOMIC DNA]</scope>
    <source>
        <strain>ATCC 49037 / DSM 5601 / CCUG 37298 / CIP 103539 / LMG 7603 / PAl5</strain>
    </source>
</reference>
<reference key="2">
    <citation type="journal article" date="2010" name="Stand. Genomic Sci.">
        <title>Two genome sequences of the same bacterial strain, Gluconacetobacter diazotrophicus PAl 5, suggest a new standard in genome sequence submission.</title>
        <authorList>
            <person name="Giongo A."/>
            <person name="Tyler H.L."/>
            <person name="Zipperer U.N."/>
            <person name="Triplett E.W."/>
        </authorList>
    </citation>
    <scope>NUCLEOTIDE SEQUENCE [LARGE SCALE GENOMIC DNA]</scope>
    <source>
        <strain>ATCC 49037 / DSM 5601 / CCUG 37298 / CIP 103539 / LMG 7603 / PAl5</strain>
    </source>
</reference>